<comment type="function">
    <text evidence="1">Involved in nucleolar processing of pre-18S ribosomal RNA. Involved in ribosome biosynthesis (By similarity).</text>
</comment>
<comment type="subunit">
    <text evidence="1">Component of the ribosomal small subunit (SSU) processome.</text>
</comment>
<comment type="subcellular location">
    <subcellularLocation>
        <location evidence="1">Nucleus</location>
        <location evidence="1">Nucleolus</location>
    </subcellularLocation>
</comment>
<comment type="similarity">
    <text evidence="3">Belongs to the HEATR1/UTP10 family.</text>
</comment>
<sequence>MASSLAAQLAQIAANSRTSLNAKALKATHSKSLIWEPRVAAGQTFAEIYQLSYEGFEELCNLDARFAQYGASLFSEQSQEADRIQMNAEENAVLDKRVDSFLHLVGSRLRLMPAIKAIEWLIRRFRSLTAPPRAAIVQQATNRPELLSVISQYTLESCRARQEYPGLVSFWGGVMAEAANGMLDKMRSGRRSIQLENDHILLQQIGPVLSEAMVMKEVPGIQIASYMIVTILAAKGSLNDVALTAFMDQLVHGWNIDTYRPGLVCLCILAQHRAAKQVSSRIAKALIKVQDLVPTLVEISRQHRVDKLANGLALAFIERLSKKGDVRSLPAINSLLSANLLRDKQIKVIYKSMLLAAHKVNDEVDEDGHIRKEIGSSLISLSQTGGDVGDVIRSAIEEVDFNIEELELKLGAAIRPKLAIEQSSEEAGAEEGAMAVENTLSLASTFQELAKLQPSTVSCLSQDSSGLFNDLCAVLLSAAAAESDMEKFDSIPALSRPLATSNPFYLSFYMRVWCGPFPTLAKVAALERVKLRLKESDCADKDFQAIIPYCAVALSDPAKKVRRAAADLIAVLGSLVKEQTRQVWGAKDLYGKVGAPNALDRDTLKALVSSVLVPSLEESVLHEAHVVAVLVSALESSKGSSGTEGGRRHLSHATRLSIFKFICGHVTETPLLAVKIRLLRSLNQIRSISGTSRTDLLLPLLRWWAALGHEEVIELTARESLDEATVDQAVVDVIIANHAAGLETAFELINDPKTALRPHLVQAIFCRVIKMWPSMKSDTKSSTARFMFNITQTLSSSEHGPVITEAVELLRKVELTTDIQLDLIDSLQDQVKLATEKPANKRRRVSTTEQSRSVGLQSNPELKAALNKTTFVLELVQESDPANHPELLPSLFTTLSDLHHLSTLIGSELGYLQNLVLSSLLAMMPAYKDNKNLTIDASVGHGDILATCIQKSSSPAVINAALLLVASLARTAPDVVLQSVMPIFTFMGSSEVIPPLIDTFRRRGRNVVASTKDLLASFVTAYEHIPSHRKHDLFISLVQNLGPEDFLFAILAMFVDRYAATDNMISFTTQMMSSFSVEIQLQTLIKLLDLTSDIFKPKPSLSNVLLGGDGSEHDTQKVATKQLNLLPHLLANKRLKREITQLAERDDMETGKIRDLYATLLESILTLATTVKNKKALYNRCGDALSNLLNLLSIAEFIKSVEALLDRPNVGLRQKVLRALELRVDSESTADPRSREALLAFLPQLTAVIRESDDMSYKHTAVTCVDKISEKYGKKDLDAVAAAAATIAGDYCLGQSSQTLRVMALLCLASLVDVLQDGIVPVLPVAIPKALDYLEQSLVGEEPNAELHNAAYAFVAALAQHIPYMITGSYLDRLLACSNASAAAALDDESSSNRTHCLQFLAKLVDPKVMYNALNQNWASASSCGASAVSEYLDILGMALDKHSKAAVAKNVASLSTIFLSAMDLRRTVVSGQAKTAISPSELGEIETKIGDDALKMIYKLNDAAFRPIFSKLMEWASTGLPKNDASGRTLRLFAVYGFLDTFFGNLKSIVTSYASYIVESAVQVLSSTNFQDADEKELWKWVLRTLGKCFEHDQDGFWQAPAHFGAVAPVLVEQFLNAGAADATEDLIPALVELAAAADSQEHHKELNGTLLKHLRNGQAAVRLAVVQCQQALTVRLGEEWLQALPEMLPYISELQDDDDEVVERENRRWIVEIEEKLGESLDSMLQ</sequence>
<dbReference type="EMBL" id="CH408030">
    <property type="protein sequence ID" value="EAQ90993.1"/>
    <property type="molecule type" value="Genomic_DNA"/>
</dbReference>
<dbReference type="RefSeq" id="XP_001229444.1">
    <property type="nucleotide sequence ID" value="XM_001229443.1"/>
</dbReference>
<dbReference type="SMR" id="Q2HA26"/>
<dbReference type="FunCoup" id="Q2HA26">
    <property type="interactions" value="979"/>
</dbReference>
<dbReference type="STRING" id="306901.Q2HA26"/>
<dbReference type="GeneID" id="4388403"/>
<dbReference type="VEuPathDB" id="FungiDB:CHGG_02928"/>
<dbReference type="eggNOG" id="KOG1837">
    <property type="taxonomic scope" value="Eukaryota"/>
</dbReference>
<dbReference type="HOGENOM" id="CLU_001128_3_1_1"/>
<dbReference type="InParanoid" id="Q2HA26"/>
<dbReference type="OMA" id="GEPFDRY"/>
<dbReference type="OrthoDB" id="31183at2759"/>
<dbReference type="Proteomes" id="UP000001056">
    <property type="component" value="Unassembled WGS sequence"/>
</dbReference>
<dbReference type="GO" id="GO:0030686">
    <property type="term" value="C:90S preribosome"/>
    <property type="evidence" value="ECO:0007669"/>
    <property type="project" value="TreeGrafter"/>
</dbReference>
<dbReference type="GO" id="GO:0032040">
    <property type="term" value="C:small-subunit processome"/>
    <property type="evidence" value="ECO:0007669"/>
    <property type="project" value="TreeGrafter"/>
</dbReference>
<dbReference type="GO" id="GO:0034455">
    <property type="term" value="C:t-UTP complex"/>
    <property type="evidence" value="ECO:0007669"/>
    <property type="project" value="TreeGrafter"/>
</dbReference>
<dbReference type="GO" id="GO:0030515">
    <property type="term" value="F:snoRNA binding"/>
    <property type="evidence" value="ECO:0007669"/>
    <property type="project" value="TreeGrafter"/>
</dbReference>
<dbReference type="GO" id="GO:0000462">
    <property type="term" value="P:maturation of SSU-rRNA from tricistronic rRNA transcript (SSU-rRNA, 5.8S rRNA, LSU-rRNA)"/>
    <property type="evidence" value="ECO:0007669"/>
    <property type="project" value="TreeGrafter"/>
</dbReference>
<dbReference type="GO" id="GO:0045943">
    <property type="term" value="P:positive regulation of transcription by RNA polymerase I"/>
    <property type="evidence" value="ECO:0007669"/>
    <property type="project" value="TreeGrafter"/>
</dbReference>
<dbReference type="Gene3D" id="1.25.10.10">
    <property type="entry name" value="Leucine-rich Repeat Variant"/>
    <property type="match status" value="2"/>
</dbReference>
<dbReference type="InterPro" id="IPR011989">
    <property type="entry name" value="ARM-like"/>
</dbReference>
<dbReference type="InterPro" id="IPR016024">
    <property type="entry name" value="ARM-type_fold"/>
</dbReference>
<dbReference type="InterPro" id="IPR012954">
    <property type="entry name" value="BP28_C_dom"/>
</dbReference>
<dbReference type="InterPro" id="IPR056473">
    <property type="entry name" value="HEAT_Utp10/HEAT1"/>
</dbReference>
<dbReference type="InterPro" id="IPR022125">
    <property type="entry name" value="U3snoRNP10_N"/>
</dbReference>
<dbReference type="InterPro" id="IPR040191">
    <property type="entry name" value="UTP10"/>
</dbReference>
<dbReference type="PANTHER" id="PTHR13457">
    <property type="entry name" value="BAP28"/>
    <property type="match status" value="1"/>
</dbReference>
<dbReference type="PANTHER" id="PTHR13457:SF1">
    <property type="entry name" value="HEAT REPEAT-CONTAINING PROTEIN 1"/>
    <property type="match status" value="1"/>
</dbReference>
<dbReference type="Pfam" id="PF08146">
    <property type="entry name" value="BP28CT"/>
    <property type="match status" value="1"/>
</dbReference>
<dbReference type="Pfam" id="PF23243">
    <property type="entry name" value="HEAT_HEATR1"/>
    <property type="match status" value="1"/>
</dbReference>
<dbReference type="Pfam" id="PF12397">
    <property type="entry name" value="U3snoRNP10"/>
    <property type="match status" value="1"/>
</dbReference>
<dbReference type="SMART" id="SM01036">
    <property type="entry name" value="BP28CT"/>
    <property type="match status" value="1"/>
</dbReference>
<dbReference type="SUPFAM" id="SSF48371">
    <property type="entry name" value="ARM repeat"/>
    <property type="match status" value="1"/>
</dbReference>
<reference evidence="4" key="1">
    <citation type="journal article" date="2015" name="Genome Announc.">
        <title>Draft genome sequence of the cellulolytic fungus Chaetomium globosum.</title>
        <authorList>
            <person name="Cuomo C.A."/>
            <person name="Untereiner W.A."/>
            <person name="Ma L.-J."/>
            <person name="Grabherr M."/>
            <person name="Birren B.W."/>
        </authorList>
    </citation>
    <scope>NUCLEOTIDE SEQUENCE [LARGE SCALE GENOMIC DNA]</scope>
    <source>
        <strain>ATCC 6205 / CBS 148.51 / DSM 1962 / NBRC 6347 / NRRL 1970</strain>
    </source>
</reference>
<organism>
    <name type="scientific">Chaetomium globosum (strain ATCC 6205 / CBS 148.51 / DSM 1962 / NBRC 6347 / NRRL 1970)</name>
    <name type="common">Soil fungus</name>
    <dbReference type="NCBI Taxonomy" id="306901"/>
    <lineage>
        <taxon>Eukaryota</taxon>
        <taxon>Fungi</taxon>
        <taxon>Dikarya</taxon>
        <taxon>Ascomycota</taxon>
        <taxon>Pezizomycotina</taxon>
        <taxon>Sordariomycetes</taxon>
        <taxon>Sordariomycetidae</taxon>
        <taxon>Sordariales</taxon>
        <taxon>Chaetomiaceae</taxon>
        <taxon>Chaetomium</taxon>
    </lineage>
</organism>
<keyword id="KW-0539">Nucleus</keyword>
<keyword id="KW-1185">Reference proteome</keyword>
<keyword id="KW-0677">Repeat</keyword>
<keyword id="KW-0687">Ribonucleoprotein</keyword>
<keyword id="KW-0690">Ribosome biogenesis</keyword>
<keyword id="KW-0698">rRNA processing</keyword>
<evidence type="ECO:0000250" key="1">
    <source>
        <dbReference type="UniProtKB" id="P42945"/>
    </source>
</evidence>
<evidence type="ECO:0000255" key="2"/>
<evidence type="ECO:0000305" key="3"/>
<evidence type="ECO:0000312" key="4">
    <source>
        <dbReference type="EMBL" id="EAQ90993.1"/>
    </source>
</evidence>
<feature type="chain" id="PRO_0000308500" description="U3 small nucleolar RNA-associated protein 10">
    <location>
        <begin position="1"/>
        <end position="1728"/>
    </location>
</feature>
<feature type="repeat" description="HEAT 1" evidence="2">
    <location>
        <begin position="540"/>
        <end position="578"/>
    </location>
</feature>
<feature type="repeat" description="HEAT 2" evidence="2">
    <location>
        <begin position="881"/>
        <end position="926"/>
    </location>
</feature>
<feature type="repeat" description="HEAT 3" evidence="2">
    <location>
        <begin position="986"/>
        <end position="1024"/>
    </location>
</feature>
<feature type="repeat" description="HEAT 4" evidence="2">
    <location>
        <begin position="1191"/>
        <end position="1229"/>
    </location>
</feature>
<feature type="repeat" description="HEAT 5" evidence="2">
    <location>
        <begin position="1235"/>
        <end position="1274"/>
    </location>
</feature>
<feature type="repeat" description="HEAT 6" evidence="2">
    <location>
        <begin position="1622"/>
        <end position="1662"/>
    </location>
</feature>
<feature type="repeat" description="HEAT 7" evidence="2">
    <location>
        <begin position="1683"/>
        <end position="1721"/>
    </location>
</feature>
<accession>Q2HA26</accession>
<gene>
    <name evidence="1" type="primary">UTP10</name>
    <name type="ORF">CHGG_02928</name>
</gene>
<proteinExistence type="inferred from homology"/>
<protein>
    <recommendedName>
        <fullName>U3 small nucleolar RNA-associated protein 10</fullName>
    </recommendedName>
</protein>
<name>UTP10_CHAGB</name>